<proteinExistence type="evidence at transcript level"/>
<keyword id="KW-0025">Alternative splicing</keyword>
<keyword id="KW-0067">ATP-binding</keyword>
<keyword id="KW-0378">Hydrolase</keyword>
<keyword id="KW-0418">Kinase</keyword>
<keyword id="KW-0511">Multifunctional enzyme</keyword>
<keyword id="KW-0547">Nucleotide-binding</keyword>
<keyword id="KW-0597">Phosphoprotein</keyword>
<keyword id="KW-1185">Reference proteome</keyword>
<keyword id="KW-0808">Transferase</keyword>
<gene>
    <name type="primary">Pfkfb3</name>
</gene>
<name>F263_RAT</name>
<dbReference type="EC" id="2.7.1.105" evidence="2"/>
<dbReference type="EC" id="3.1.3.46" evidence="2"/>
<dbReference type="EMBL" id="D87240">
    <property type="protein sequence ID" value="BAA21749.1"/>
    <property type="molecule type" value="mRNA"/>
</dbReference>
<dbReference type="EMBL" id="D87241">
    <property type="protein sequence ID" value="BAA21750.1"/>
    <property type="molecule type" value="mRNA"/>
</dbReference>
<dbReference type="EMBL" id="D87242">
    <property type="protein sequence ID" value="BAA21751.1"/>
    <property type="molecule type" value="mRNA"/>
</dbReference>
<dbReference type="EMBL" id="D87243">
    <property type="protein sequence ID" value="BAA21752.1"/>
    <property type="molecule type" value="mRNA"/>
</dbReference>
<dbReference type="EMBL" id="D87244">
    <property type="protein sequence ID" value="BAA21753.1"/>
    <property type="molecule type" value="mRNA"/>
</dbReference>
<dbReference type="EMBL" id="D87245">
    <property type="protein sequence ID" value="BAA21754.1"/>
    <property type="molecule type" value="mRNA"/>
</dbReference>
<dbReference type="EMBL" id="D87246">
    <property type="protein sequence ID" value="BAA21755.1"/>
    <property type="molecule type" value="mRNA"/>
</dbReference>
<dbReference type="EMBL" id="D87247">
    <property type="protein sequence ID" value="BAA21756.1"/>
    <property type="molecule type" value="mRNA"/>
</dbReference>
<dbReference type="EMBL" id="AB006710">
    <property type="protein sequence ID" value="BAA22048.1"/>
    <property type="molecule type" value="mRNA"/>
</dbReference>
<dbReference type="RefSeq" id="NP_476476.1">
    <molecule id="O35552-1"/>
    <property type="nucleotide sequence ID" value="NM_057135.1"/>
</dbReference>
<dbReference type="RefSeq" id="XP_006254254.1">
    <molecule id="O35552-3"/>
    <property type="nucleotide sequence ID" value="XM_006254192.4"/>
</dbReference>
<dbReference type="RefSeq" id="XP_006254255.1">
    <molecule id="O35552-2"/>
    <property type="nucleotide sequence ID" value="XM_006254193.4"/>
</dbReference>
<dbReference type="RefSeq" id="XP_006254258.1">
    <molecule id="O35552-4"/>
    <property type="nucleotide sequence ID" value="XM_006254196.4"/>
</dbReference>
<dbReference type="RefSeq" id="XP_006254259.1">
    <molecule id="O35552-6"/>
    <property type="nucleotide sequence ID" value="XM_006254197.4"/>
</dbReference>
<dbReference type="RefSeq" id="XP_006254260.1">
    <molecule id="O35552-5"/>
    <property type="nucleotide sequence ID" value="XM_006254198.4"/>
</dbReference>
<dbReference type="SMR" id="O35552"/>
<dbReference type="BioGRID" id="250723">
    <property type="interactions" value="1"/>
</dbReference>
<dbReference type="ComplexPortal" id="CPX-2043">
    <property type="entry name" value="6-phosphofructo-2-kinase/fructose-2,6-biphosphatase 3 complex"/>
</dbReference>
<dbReference type="FunCoup" id="O35552">
    <property type="interactions" value="1349"/>
</dbReference>
<dbReference type="IntAct" id="O35552">
    <property type="interactions" value="2"/>
</dbReference>
<dbReference type="STRING" id="10116.ENSRNOP00000062965"/>
<dbReference type="iPTMnet" id="O35552"/>
<dbReference type="PhosphoSitePlus" id="O35552"/>
<dbReference type="jPOST" id="O35552"/>
<dbReference type="PaxDb" id="10116-ENSRNOP00000062965"/>
<dbReference type="Ensembl" id="ENSRNOT00000025700.5">
    <molecule id="O35552-2"/>
    <property type="protein sequence ID" value="ENSRNOP00000025700.4"/>
    <property type="gene ID" value="ENSRNOG00000018911.9"/>
</dbReference>
<dbReference type="Ensembl" id="ENSRNOT00000025731.6">
    <molecule id="O35552-4"/>
    <property type="protein sequence ID" value="ENSRNOP00000025731.5"/>
    <property type="gene ID" value="ENSRNOG00000018911.9"/>
</dbReference>
<dbReference type="Ensembl" id="ENSRNOT00000051067.5">
    <molecule id="O35552-3"/>
    <property type="protein sequence ID" value="ENSRNOP00000040928.4"/>
    <property type="gene ID" value="ENSRNOG00000018911.9"/>
</dbReference>
<dbReference type="Ensembl" id="ENSRNOT00000068354.4">
    <molecule id="O35552-1"/>
    <property type="protein sequence ID" value="ENSRNOP00000062965.1"/>
    <property type="gene ID" value="ENSRNOG00000018911.9"/>
</dbReference>
<dbReference type="GeneID" id="117276"/>
<dbReference type="KEGG" id="rno:117276"/>
<dbReference type="AGR" id="RGD:619776"/>
<dbReference type="CTD" id="5209"/>
<dbReference type="RGD" id="619776">
    <property type="gene designation" value="Pfkfb3"/>
</dbReference>
<dbReference type="eggNOG" id="KOG0234">
    <property type="taxonomic scope" value="Eukaryota"/>
</dbReference>
<dbReference type="GeneTree" id="ENSGT00950000182835"/>
<dbReference type="HOGENOM" id="CLU_006383_1_1_1"/>
<dbReference type="InParanoid" id="O35552"/>
<dbReference type="OMA" id="RCLMGYF"/>
<dbReference type="OrthoDB" id="267323at2759"/>
<dbReference type="PhylomeDB" id="O35552"/>
<dbReference type="TreeFam" id="TF313541"/>
<dbReference type="BRENDA" id="3.1.3.46">
    <property type="organism ID" value="5301"/>
</dbReference>
<dbReference type="Reactome" id="R-RNO-9634600">
    <property type="pathway name" value="Regulation of glycolysis by fructose 2,6-bisphosphate metabolism"/>
</dbReference>
<dbReference type="PRO" id="PR:O35552"/>
<dbReference type="Proteomes" id="UP000002494">
    <property type="component" value="Chromosome 17"/>
</dbReference>
<dbReference type="Bgee" id="ENSRNOG00000018911">
    <property type="expression patterns" value="Expressed in skeletal muscle tissue and 19 other cell types or tissues"/>
</dbReference>
<dbReference type="ExpressionAtlas" id="O35552">
    <property type="expression patterns" value="baseline and differential"/>
</dbReference>
<dbReference type="GO" id="GO:0005829">
    <property type="term" value="C:cytosol"/>
    <property type="evidence" value="ECO:0000318"/>
    <property type="project" value="GO_Central"/>
</dbReference>
<dbReference type="GO" id="GO:0005654">
    <property type="term" value="C:nucleoplasm"/>
    <property type="evidence" value="ECO:0007669"/>
    <property type="project" value="Ensembl"/>
</dbReference>
<dbReference type="GO" id="GO:0003873">
    <property type="term" value="F:6-phosphofructo-2-kinase activity"/>
    <property type="evidence" value="ECO:0000250"/>
    <property type="project" value="UniProtKB"/>
</dbReference>
<dbReference type="GO" id="GO:0005524">
    <property type="term" value="F:ATP binding"/>
    <property type="evidence" value="ECO:0007669"/>
    <property type="project" value="UniProtKB-KW"/>
</dbReference>
<dbReference type="GO" id="GO:0004331">
    <property type="term" value="F:fructose-2,6-bisphosphate 2-phosphatase activity"/>
    <property type="evidence" value="ECO:0000250"/>
    <property type="project" value="UniProtKB"/>
</dbReference>
<dbReference type="GO" id="GO:0006915">
    <property type="term" value="P:apoptotic process"/>
    <property type="evidence" value="ECO:0000266"/>
    <property type="project" value="RGD"/>
</dbReference>
<dbReference type="GO" id="GO:0006003">
    <property type="term" value="P:fructose 2,6-bisphosphate metabolic process"/>
    <property type="evidence" value="ECO:0000314"/>
    <property type="project" value="RGD"/>
</dbReference>
<dbReference type="GO" id="GO:0006000">
    <property type="term" value="P:fructose metabolic process"/>
    <property type="evidence" value="ECO:0007669"/>
    <property type="project" value="InterPro"/>
</dbReference>
<dbReference type="GO" id="GO:0010001">
    <property type="term" value="P:glial cell differentiation"/>
    <property type="evidence" value="ECO:0000266"/>
    <property type="project" value="RGD"/>
</dbReference>
<dbReference type="GO" id="GO:0006096">
    <property type="term" value="P:glycolytic process"/>
    <property type="evidence" value="ECO:0000266"/>
    <property type="project" value="RGD"/>
</dbReference>
<dbReference type="GO" id="GO:0061744">
    <property type="term" value="P:motor behavior"/>
    <property type="evidence" value="ECO:0000266"/>
    <property type="project" value="RGD"/>
</dbReference>
<dbReference type="GO" id="GO:0006110">
    <property type="term" value="P:regulation of glycolytic process"/>
    <property type="evidence" value="ECO:0000304"/>
    <property type="project" value="RGD"/>
</dbReference>
<dbReference type="CDD" id="cd07067">
    <property type="entry name" value="HP_PGM_like"/>
    <property type="match status" value="1"/>
</dbReference>
<dbReference type="FunFam" id="3.40.50.1240:FF:000001">
    <property type="entry name" value="6-phosphofructo-2-kinase/fructose-2, 6-bisphosphatase 3 isoform 2"/>
    <property type="match status" value="1"/>
</dbReference>
<dbReference type="FunFam" id="3.40.50.300:FF:000047">
    <property type="entry name" value="6-phosphofructo-2-kinase/fructose-2, 6-bisphosphatase 3 isoform 2"/>
    <property type="match status" value="1"/>
</dbReference>
<dbReference type="Gene3D" id="3.40.50.300">
    <property type="entry name" value="P-loop containing nucleotide triphosphate hydrolases"/>
    <property type="match status" value="1"/>
</dbReference>
<dbReference type="Gene3D" id="3.40.50.1240">
    <property type="entry name" value="Phosphoglycerate mutase-like"/>
    <property type="match status" value="1"/>
</dbReference>
<dbReference type="InterPro" id="IPR003094">
    <property type="entry name" value="6Pfruct_kin"/>
</dbReference>
<dbReference type="InterPro" id="IPR013079">
    <property type="entry name" value="6Phosfructo_kin"/>
</dbReference>
<dbReference type="InterPro" id="IPR013078">
    <property type="entry name" value="His_Pase_superF_clade-1"/>
</dbReference>
<dbReference type="InterPro" id="IPR029033">
    <property type="entry name" value="His_PPase_superfam"/>
</dbReference>
<dbReference type="InterPro" id="IPR027417">
    <property type="entry name" value="P-loop_NTPase"/>
</dbReference>
<dbReference type="InterPro" id="IPR001345">
    <property type="entry name" value="PG/BPGM_mutase_AS"/>
</dbReference>
<dbReference type="PANTHER" id="PTHR10606">
    <property type="entry name" value="6-PHOSPHOFRUCTO-2-KINASE/FRUCTOSE-2,6-BISPHOSPHATASE"/>
    <property type="match status" value="1"/>
</dbReference>
<dbReference type="PANTHER" id="PTHR10606:SF41">
    <property type="entry name" value="6-PHOSPHOFRUCTO-2-KINASE_FRUCTOSE-2,6-BISPHOSPHATASE 3"/>
    <property type="match status" value="1"/>
</dbReference>
<dbReference type="Pfam" id="PF01591">
    <property type="entry name" value="6PF2K"/>
    <property type="match status" value="1"/>
</dbReference>
<dbReference type="Pfam" id="PF00300">
    <property type="entry name" value="His_Phos_1"/>
    <property type="match status" value="1"/>
</dbReference>
<dbReference type="PRINTS" id="PR00991">
    <property type="entry name" value="6PFRUCTKNASE"/>
</dbReference>
<dbReference type="SMART" id="SM00855">
    <property type="entry name" value="PGAM"/>
    <property type="match status" value="1"/>
</dbReference>
<dbReference type="SUPFAM" id="SSF52540">
    <property type="entry name" value="P-loop containing nucleoside triphosphate hydrolases"/>
    <property type="match status" value="1"/>
</dbReference>
<dbReference type="SUPFAM" id="SSF53254">
    <property type="entry name" value="Phosphoglycerate mutase-like"/>
    <property type="match status" value="1"/>
</dbReference>
<dbReference type="PROSITE" id="PS00175">
    <property type="entry name" value="PG_MUTASE"/>
    <property type="match status" value="1"/>
</dbReference>
<sequence length="555" mass="63676">MPLELTQSRVQKIWVPVDHRPSLPRSCGPKLTNSPTVIVMVGLPARGKTYISKKLTRYLNWIGVPTKVFNVGEYRREAVKQYSSYNFFRPDNEEAMRVRKQCALAALRDVKSYLTKEGGQIAVFDATNTTRERRHMILHFAKENDFKAFFIESVCDDPTVVASNIMEVKISSPDYKDCNSAEAMDDFMKRINCYEASYQPLDPDKCDRDLSFIKVIDVGRRFLVNRVQDHIQSRIVYYLMNIHVQPRTIYLCRHGENEYNVQGKIGGDSGLSSRGKKFANALSKFVEEQNLKDLRVWTSQLKSTIQTAEALRLPYEQWKALNEIDAGVCEELTYEEIRDTYPEEYALREQDKYYYRYPTGESYQDLVQRLEPVIMELERQENVLVICHQAVLRCLLAYFLDKSAEEMPYLKCPLHTVLKLTPVAYGCRVESIYLNVESVSTHRERSEAVKIQHFASVVRPSSYTELDFLSVESAKQDAKKGPNPLMRRNSVTPLASPEPTKKPRINSFEEHVASTSAALPSCLPPEVPTQLPGQPLLGKACLRTVCHIFSKFSPY</sequence>
<protein>
    <recommendedName>
        <fullName>6-phosphofructo-2-kinase/fructose-2,6-bisphosphatase 3</fullName>
        <shortName>6PF-2-K/Fru-2,6-P2ase 3</shortName>
        <shortName>PFK/FBPase 3</shortName>
    </recommendedName>
    <alternativeName>
        <fullName>6PF-2-K/Fru-2,6-P2ase brain-type isozyme</fullName>
    </alternativeName>
    <alternativeName>
        <fullName>RB2K</fullName>
    </alternativeName>
    <domain>
        <recommendedName>
            <fullName>6-phosphofructo-2-kinase</fullName>
            <ecNumber evidence="2">2.7.1.105</ecNumber>
        </recommendedName>
    </domain>
    <domain>
        <recommendedName>
            <fullName>Fructose-2,6-bisphosphatase</fullName>
            <ecNumber evidence="2">3.1.3.46</ecNumber>
        </recommendedName>
    </domain>
</protein>
<organism>
    <name type="scientific">Rattus norvegicus</name>
    <name type="common">Rat</name>
    <dbReference type="NCBI Taxonomy" id="10116"/>
    <lineage>
        <taxon>Eukaryota</taxon>
        <taxon>Metazoa</taxon>
        <taxon>Chordata</taxon>
        <taxon>Craniata</taxon>
        <taxon>Vertebrata</taxon>
        <taxon>Euteleostomi</taxon>
        <taxon>Mammalia</taxon>
        <taxon>Eutheria</taxon>
        <taxon>Euarchontoglires</taxon>
        <taxon>Glires</taxon>
        <taxon>Rodentia</taxon>
        <taxon>Myomorpha</taxon>
        <taxon>Muroidea</taxon>
        <taxon>Muridae</taxon>
        <taxon>Murinae</taxon>
        <taxon>Rattus</taxon>
    </lineage>
</organism>
<comment type="function">
    <text evidence="2">Catalyzes both the synthesis and degradation of fructose 2,6-bisphosphate.</text>
</comment>
<comment type="catalytic activity">
    <reaction evidence="2">
        <text>beta-D-fructose 2,6-bisphosphate + H2O = beta-D-fructose 6-phosphate + phosphate</text>
        <dbReference type="Rhea" id="RHEA:17289"/>
        <dbReference type="ChEBI" id="CHEBI:15377"/>
        <dbReference type="ChEBI" id="CHEBI:43474"/>
        <dbReference type="ChEBI" id="CHEBI:57634"/>
        <dbReference type="ChEBI" id="CHEBI:58579"/>
        <dbReference type="EC" id="3.1.3.46"/>
    </reaction>
    <physiologicalReaction direction="left-to-right" evidence="2">
        <dbReference type="Rhea" id="RHEA:17290"/>
    </physiologicalReaction>
</comment>
<comment type="catalytic activity">
    <reaction evidence="2">
        <text>beta-D-fructose 6-phosphate + ATP = beta-D-fructose 2,6-bisphosphate + ADP + H(+)</text>
        <dbReference type="Rhea" id="RHEA:15653"/>
        <dbReference type="ChEBI" id="CHEBI:15378"/>
        <dbReference type="ChEBI" id="CHEBI:30616"/>
        <dbReference type="ChEBI" id="CHEBI:57634"/>
        <dbReference type="ChEBI" id="CHEBI:58579"/>
        <dbReference type="ChEBI" id="CHEBI:456216"/>
        <dbReference type="EC" id="2.7.1.105"/>
    </reaction>
    <physiologicalReaction direction="left-to-right" evidence="2">
        <dbReference type="Rhea" id="RHEA:15654"/>
    </physiologicalReaction>
</comment>
<comment type="subunit">
    <text evidence="2">Homodimer. Forms a heterodimer with PFKFB2 (By similarity).</text>
</comment>
<comment type="alternative products">
    <event type="alternative splicing"/>
    <isoform>
        <id>O35552-1</id>
        <name>1</name>
        <name>RB2K1</name>
        <sequence type="displayed"/>
    </isoform>
    <isoform>
        <id>O35552-2</id>
        <name>2</name>
        <name>RB2K2</name>
        <sequence type="described" ref="VSP_004682"/>
    </isoform>
    <isoform>
        <id>O35552-3</id>
        <name>3</name>
        <name>RB2K3</name>
        <sequence type="described" ref="VSP_004683"/>
    </isoform>
    <isoform>
        <id>O35552-4</id>
        <name>4</name>
        <name>RB2K4</name>
        <sequence type="described" ref="VSP_004681"/>
    </isoform>
    <isoform>
        <id>O35552-5</id>
        <name>5</name>
        <name>RB2K5</name>
        <sequence type="described" ref="VSP_004681 VSP_004682"/>
    </isoform>
    <isoform>
        <id>O35552-6</id>
        <name>6</name>
        <name>RB2K6</name>
        <sequence type="described" ref="VSP_004681 VSP_004683"/>
    </isoform>
    <isoform>
        <id>O35552-7</id>
        <name>7</name>
        <name>RB2K7</name>
        <sequence type="described" ref="VSP_004684"/>
    </isoform>
    <isoform>
        <id>O35552-8</id>
        <name>8</name>
        <name>RB2K8</name>
        <sequence type="described" ref="VSP_004681 VSP_004684"/>
    </isoform>
</comment>
<comment type="PTM">
    <text evidence="2">Phosphorylation by AMPK stimulates activity.</text>
</comment>
<comment type="similarity">
    <text evidence="5">In the C-terminal section; belongs to the phosphoglycerate mutase family.</text>
</comment>
<reference key="1">
    <citation type="journal article" date="1997" name="J. Neurochem.">
        <title>Novel isoforms of rat brain fructose 6-phosphate 2-kinase/fructose 2,6-bisphosphatase are generated by tissue-specific alternative splicing.</title>
        <authorList>
            <person name="Watanabe F."/>
            <person name="Sakai A."/>
            <person name="Furuya E."/>
        </authorList>
    </citation>
    <scope>NUCLEOTIDE SEQUENCE [MRNA]</scope>
    <scope>ALTERNATIVE SPLICING</scope>
    <source>
        <strain>Sprague-Dawley</strain>
        <tissue>Brain</tissue>
    </source>
</reference>
<reference key="2">
    <citation type="submission" date="1997-08" db="EMBL/GenBank/DDBJ databases">
        <authorList>
            <person name="Sakakibara R."/>
        </authorList>
    </citation>
    <scope>NUCLEOTIDE SEQUENCE [MRNA] OF 61-369</scope>
    <source>
        <strain>Wistar</strain>
        <tissue>Placenta</tissue>
    </source>
</reference>
<accession>O35552</accession>
<accession>O35096</accession>
<accession>O35553</accession>
<accession>O35554</accession>
<accession>O35555</accession>
<accession>O35556</accession>
<accession>O35557</accession>
<accession>Q9QWQ5</accession>
<accession>Q9QWQ6</accession>
<evidence type="ECO:0000250" key="1">
    <source>
        <dbReference type="UniProtKB" id="P07953"/>
    </source>
</evidence>
<evidence type="ECO:0000250" key="2">
    <source>
        <dbReference type="UniProtKB" id="Q16875"/>
    </source>
</evidence>
<evidence type="ECO:0000255" key="3"/>
<evidence type="ECO:0000256" key="4">
    <source>
        <dbReference type="SAM" id="MobiDB-lite"/>
    </source>
</evidence>
<evidence type="ECO:0000305" key="5"/>
<feature type="chain" id="PRO_0000179969" description="6-phosphofructo-2-kinase/fructose-2,6-bisphosphatase 3">
    <location>
        <begin position="1"/>
        <end position="555"/>
    </location>
</feature>
<feature type="region of interest" description="6-phosphofructo-2-kinase">
    <location>
        <begin position="1"/>
        <end position="245"/>
    </location>
</feature>
<feature type="region of interest" description="Fructose-2,6-bisphosphatase">
    <location>
        <begin position="246"/>
        <end position="555"/>
    </location>
</feature>
<feature type="region of interest" description="Disordered" evidence="4">
    <location>
        <begin position="475"/>
        <end position="504"/>
    </location>
</feature>
<feature type="active site" evidence="3">
    <location>
        <position position="125"/>
    </location>
</feature>
<feature type="active site" evidence="3">
    <location>
        <position position="155"/>
    </location>
</feature>
<feature type="active site" description="Tele-phosphohistidine intermediate" evidence="2">
    <location>
        <position position="254"/>
    </location>
</feature>
<feature type="active site" description="Proton donor/acceptor" evidence="2">
    <location>
        <position position="323"/>
    </location>
</feature>
<feature type="binding site" evidence="2">
    <location>
        <begin position="42"/>
        <end position="50"/>
    </location>
    <ligand>
        <name>ATP</name>
        <dbReference type="ChEBI" id="CHEBI:30616"/>
    </ligand>
</feature>
<feature type="binding site" evidence="2">
    <location>
        <position position="75"/>
    </location>
    <ligand>
        <name>beta-D-fructose 6-phosphate</name>
        <dbReference type="ChEBI" id="CHEBI:57634"/>
    </ligand>
</feature>
<feature type="binding site" evidence="2">
    <location>
        <position position="99"/>
    </location>
    <ligand>
        <name>beta-D-fructose 6-phosphate</name>
        <dbReference type="ChEBI" id="CHEBI:57634"/>
    </ligand>
</feature>
<feature type="binding site" evidence="2">
    <location>
        <position position="127"/>
    </location>
    <ligand>
        <name>beta-D-fructose 6-phosphate</name>
        <dbReference type="ChEBI" id="CHEBI:57634"/>
    </ligand>
</feature>
<feature type="binding site" evidence="2">
    <location>
        <position position="133"/>
    </location>
    <ligand>
        <name>beta-D-fructose 6-phosphate</name>
        <dbReference type="ChEBI" id="CHEBI:57634"/>
    </ligand>
</feature>
<feature type="binding site" evidence="2">
    <location>
        <begin position="164"/>
        <end position="169"/>
    </location>
    <ligand>
        <name>ATP</name>
        <dbReference type="ChEBI" id="CHEBI:30616"/>
    </ligand>
</feature>
<feature type="binding site" evidence="2">
    <location>
        <position position="169"/>
    </location>
    <ligand>
        <name>beta-D-fructose 6-phosphate</name>
        <dbReference type="ChEBI" id="CHEBI:57634"/>
    </ligand>
</feature>
<feature type="binding site" evidence="2">
    <location>
        <position position="190"/>
    </location>
    <ligand>
        <name>beta-D-fructose 6-phosphate</name>
        <dbReference type="ChEBI" id="CHEBI:57634"/>
    </ligand>
</feature>
<feature type="binding site" evidence="2">
    <location>
        <position position="194"/>
    </location>
    <ligand>
        <name>beta-D-fructose 6-phosphate</name>
        <dbReference type="ChEBI" id="CHEBI:57634"/>
    </ligand>
</feature>
<feature type="binding site" evidence="2">
    <location>
        <position position="253"/>
    </location>
    <ligand>
        <name>beta-D-fructose 2,6-bisphosphate</name>
        <dbReference type="ChEBI" id="CHEBI:58579"/>
    </ligand>
</feature>
<feature type="binding site" evidence="2">
    <location>
        <position position="260"/>
    </location>
    <ligand>
        <name>beta-D-fructose 2,6-bisphosphate</name>
        <dbReference type="ChEBI" id="CHEBI:58579"/>
    </ligand>
</feature>
<feature type="binding site" evidence="2">
    <location>
        <position position="266"/>
    </location>
    <ligand>
        <name>beta-D-fructose 2,6-bisphosphate</name>
        <dbReference type="ChEBI" id="CHEBI:58579"/>
    </ligand>
</feature>
<feature type="binding site" evidence="2">
    <location>
        <position position="334"/>
    </location>
    <ligand>
        <name>beta-D-fructose 2,6-bisphosphate</name>
        <dbReference type="ChEBI" id="CHEBI:58579"/>
    </ligand>
</feature>
<feature type="binding site" evidence="1">
    <location>
        <begin position="345"/>
        <end position="348"/>
    </location>
    <ligand>
        <name>ATP</name>
        <dbReference type="ChEBI" id="CHEBI:30616"/>
    </ligand>
</feature>
<feature type="binding site" evidence="2">
    <location>
        <position position="348"/>
    </location>
    <ligand>
        <name>beta-D-fructose 2,6-bisphosphate</name>
        <dbReference type="ChEBI" id="CHEBI:58579"/>
    </ligand>
</feature>
<feature type="binding site" evidence="2">
    <location>
        <position position="352"/>
    </location>
    <ligand>
        <name>beta-D-fructose 2,6-bisphosphate</name>
        <dbReference type="ChEBI" id="CHEBI:58579"/>
    </ligand>
</feature>
<feature type="binding site" evidence="2">
    <location>
        <position position="363"/>
    </location>
    <ligand>
        <name>beta-D-fructose 2,6-bisphosphate</name>
        <dbReference type="ChEBI" id="CHEBI:58579"/>
    </ligand>
</feature>
<feature type="binding site" evidence="1">
    <location>
        <begin position="389"/>
        <end position="393"/>
    </location>
    <ligand>
        <name>ATP</name>
        <dbReference type="ChEBI" id="CHEBI:30616"/>
    </ligand>
</feature>
<feature type="binding site" evidence="2">
    <location>
        <position position="389"/>
    </location>
    <ligand>
        <name>beta-D-fructose 2,6-bisphosphate</name>
        <dbReference type="ChEBI" id="CHEBI:58579"/>
    </ligand>
</feature>
<feature type="binding site" evidence="1">
    <location>
        <position position="393"/>
    </location>
    <ligand>
        <name>beta-D-fructose 2,6-bisphosphate</name>
        <dbReference type="ChEBI" id="CHEBI:58579"/>
    </ligand>
</feature>
<feature type="binding site" evidence="2">
    <location>
        <position position="425"/>
    </location>
    <ligand>
        <name>ATP</name>
        <dbReference type="ChEBI" id="CHEBI:30616"/>
    </ligand>
</feature>
<feature type="site" description="Transition state stabilizer" evidence="2">
    <location>
        <position position="253"/>
    </location>
</feature>
<feature type="site" description="Transition state stabilizer" evidence="2">
    <location>
        <position position="260"/>
    </location>
</feature>
<feature type="site" description="Transition state stabilizer" evidence="2">
    <location>
        <position position="388"/>
    </location>
</feature>
<feature type="modified residue" description="Phosphoserine; by AMPK and PKA" evidence="2">
    <location>
        <position position="490"/>
    </location>
</feature>
<feature type="modified residue" description="Phosphothreonine" evidence="2">
    <location>
        <position position="492"/>
    </location>
</feature>
<feature type="modified residue" description="Phosphoserine" evidence="2">
    <location>
        <position position="496"/>
    </location>
</feature>
<feature type="splice variant" id="VSP_004681" description="In isoform 4, isoform 5, isoform 6 and isoform 8." evidence="5">
    <location>
        <begin position="448"/>
        <end position="476"/>
    </location>
</feature>
<feature type="splice variant" id="VSP_004683" description="In isoform 3 and isoform 6." evidence="5">
    <original>PLLGKACLRTVCHIFSKFSPY</original>
    <variation>NMRSPRSGAESSQKH</variation>
    <location>
        <begin position="535"/>
        <end position="555"/>
    </location>
</feature>
<feature type="splice variant" id="VSP_004682" description="In isoform 2 and isoform 5." evidence="5">
    <original>RTVCHIFSKFSPY</original>
    <variation>T</variation>
    <location>
        <begin position="543"/>
        <end position="555"/>
    </location>
</feature>
<feature type="splice variant" id="VSP_004684" description="In isoform 7 and isoform 8." evidence="5">
    <location>
        <begin position="543"/>
        <end position="555"/>
    </location>
</feature>
<feature type="sequence conflict" description="In Ref. 2; BAA22048." evidence="5" ref="2">
    <original>D</original>
    <variation>H</variation>
    <location>
        <position position="185"/>
    </location>
</feature>
<feature type="sequence conflict" description="In Ref. 2; BAA22048." evidence="5" ref="2">
    <original>V</original>
    <variation>L</variation>
    <location>
        <position position="367"/>
    </location>
</feature>